<comment type="similarity">
    <text evidence="1">Belongs to the tRNA-intron endonuclease family. Archaeal short subfamily.</text>
</comment>
<comment type="caution">
    <text evidence="1">Although strongly related to the EndA enzyme, it does not contain the conserved Tyr-His-Lys active sites, preventing tRNA-splicing activity.</text>
</comment>
<accession>Q8TGZ5</accession>
<organism>
    <name type="scientific">Methanopyrus kandleri (strain AV19 / DSM 6324 / JCM 9639 / NBRC 100938)</name>
    <dbReference type="NCBI Taxonomy" id="190192"/>
    <lineage>
        <taxon>Archaea</taxon>
        <taxon>Methanobacteriati</taxon>
        <taxon>Methanobacteriota</taxon>
        <taxon>Methanomada group</taxon>
        <taxon>Methanopyri</taxon>
        <taxon>Methanopyrales</taxon>
        <taxon>Methanopyraceae</taxon>
        <taxon>Methanopyrus</taxon>
    </lineage>
</organism>
<dbReference type="EMBL" id="AE009439">
    <property type="protein sequence ID" value="AAM01612.1"/>
    <property type="molecule type" value="Genomic_DNA"/>
</dbReference>
<dbReference type="RefSeq" id="WP_011018767.1">
    <property type="nucleotide sequence ID" value="NC_003551.1"/>
</dbReference>
<dbReference type="PDB" id="5X89">
    <property type="method" value="X-ray"/>
    <property type="resolution" value="1.53 A"/>
    <property type="chains" value="A=2-166"/>
</dbReference>
<dbReference type="PDBsum" id="5X89"/>
<dbReference type="SMR" id="Q8TGZ5"/>
<dbReference type="STRING" id="190192.MK0397"/>
<dbReference type="PaxDb" id="190192-MK0397"/>
<dbReference type="EnsemblBacteria" id="AAM01612">
    <property type="protein sequence ID" value="AAM01612"/>
    <property type="gene ID" value="MK0397"/>
</dbReference>
<dbReference type="GeneID" id="1477700"/>
<dbReference type="KEGG" id="mka:MK0397"/>
<dbReference type="HOGENOM" id="CLU_114393_0_0_2"/>
<dbReference type="InParanoid" id="Q8TGZ5"/>
<dbReference type="OrthoDB" id="46045at2157"/>
<dbReference type="BRENDA" id="4.6.1.16">
    <property type="organism ID" value="3274"/>
</dbReference>
<dbReference type="Proteomes" id="UP000001826">
    <property type="component" value="Chromosome"/>
</dbReference>
<dbReference type="GO" id="GO:0005737">
    <property type="term" value="C:cytoplasm"/>
    <property type="evidence" value="ECO:0007669"/>
    <property type="project" value="TreeGrafter"/>
</dbReference>
<dbReference type="GO" id="GO:0003676">
    <property type="term" value="F:nucleic acid binding"/>
    <property type="evidence" value="ECO:0007669"/>
    <property type="project" value="InterPro"/>
</dbReference>
<dbReference type="GO" id="GO:0000213">
    <property type="term" value="F:tRNA-intron endonuclease activity"/>
    <property type="evidence" value="ECO:0007669"/>
    <property type="project" value="InterPro"/>
</dbReference>
<dbReference type="GO" id="GO:0006388">
    <property type="term" value="P:tRNA splicing, via endonucleolytic cleavage and ligation"/>
    <property type="evidence" value="ECO:0007669"/>
    <property type="project" value="InterPro"/>
</dbReference>
<dbReference type="CDD" id="cd22363">
    <property type="entry name" value="tRNA-intron_lyase_C"/>
    <property type="match status" value="1"/>
</dbReference>
<dbReference type="Gene3D" id="3.40.1350.10">
    <property type="match status" value="1"/>
</dbReference>
<dbReference type="Gene3D" id="3.40.1170.20">
    <property type="entry name" value="tRNA intron endonuclease, N-terminal domain"/>
    <property type="match status" value="1"/>
</dbReference>
<dbReference type="InterPro" id="IPR011856">
    <property type="entry name" value="tRNA_endonuc-like_dom_sf"/>
</dbReference>
<dbReference type="InterPro" id="IPR036167">
    <property type="entry name" value="tRNA_intron_Endo_cat-like_sf"/>
</dbReference>
<dbReference type="InterPro" id="IPR006677">
    <property type="entry name" value="tRNA_intron_Endonuc_cat-like"/>
</dbReference>
<dbReference type="InterPro" id="IPR006678">
    <property type="entry name" value="tRNA_intron_Endonuc_N"/>
</dbReference>
<dbReference type="InterPro" id="IPR036740">
    <property type="entry name" value="tRNA_intron_Endonuc_N_sf"/>
</dbReference>
<dbReference type="InterPro" id="IPR006676">
    <property type="entry name" value="tRNA_splic"/>
</dbReference>
<dbReference type="InterPro" id="IPR016442">
    <property type="entry name" value="tRNA_splic_arch_short"/>
</dbReference>
<dbReference type="PANTHER" id="PTHR21227">
    <property type="entry name" value="TRNA-SPLICING ENDONUCLEASE SUBUNIT SEN2"/>
    <property type="match status" value="1"/>
</dbReference>
<dbReference type="PANTHER" id="PTHR21227:SF0">
    <property type="entry name" value="TRNA-SPLICING ENDONUCLEASE SUBUNIT SEN2"/>
    <property type="match status" value="1"/>
</dbReference>
<dbReference type="Pfam" id="PF01974">
    <property type="entry name" value="tRNA_int_endo"/>
    <property type="match status" value="1"/>
</dbReference>
<dbReference type="Pfam" id="PF02778">
    <property type="entry name" value="tRNA_int_endo_N"/>
    <property type="match status" value="1"/>
</dbReference>
<dbReference type="PIRSF" id="PIRSF005285">
    <property type="entry name" value="tRNA_splic_archaea"/>
    <property type="match status" value="1"/>
</dbReference>
<dbReference type="SUPFAM" id="SSF53032">
    <property type="entry name" value="tRNA-intron endonuclease catalytic domain-like"/>
    <property type="match status" value="1"/>
</dbReference>
<dbReference type="SUPFAM" id="SSF55267">
    <property type="entry name" value="tRNA-intron endonuclease N-terminal domain-like"/>
    <property type="match status" value="1"/>
</dbReference>
<protein>
    <recommendedName>
        <fullName>EndA-like protein</fullName>
    </recommendedName>
</protein>
<proteinExistence type="evidence at protein level"/>
<reference key="1">
    <citation type="journal article" date="2002" name="Proc. Natl. Acad. Sci. U.S.A.">
        <title>The complete genome of hyperthermophile Methanopyrus kandleri AV19 and monophyly of archaeal methanogens.</title>
        <authorList>
            <person name="Slesarev A.I."/>
            <person name="Mezhevaya K.V."/>
            <person name="Makarova K.S."/>
            <person name="Polushin N.N."/>
            <person name="Shcherbinina O.V."/>
            <person name="Shakhova V.V."/>
            <person name="Belova G.I."/>
            <person name="Aravind L."/>
            <person name="Natale D.A."/>
            <person name="Rogozin I.B."/>
            <person name="Tatusov R.L."/>
            <person name="Wolf Y.I."/>
            <person name="Stetter K.O."/>
            <person name="Malykh A.G."/>
            <person name="Koonin E.V."/>
            <person name="Kozyavkin S.A."/>
        </authorList>
    </citation>
    <scope>NUCLEOTIDE SEQUENCE [LARGE SCALE GENOMIC DNA]</scope>
    <source>
        <strain>AV19 / DSM 6324 / JCM 9639 / NBRC 100938</strain>
    </source>
</reference>
<evidence type="ECO:0000305" key="1"/>
<evidence type="ECO:0007829" key="2">
    <source>
        <dbReference type="PDB" id="5X89"/>
    </source>
</evidence>
<gene>
    <name type="ordered locus">MK0397</name>
</gene>
<sequence>MAAKGELVGSKVLVRNDRDANRLYSSMYGKPSRRGLQLWPEEALFLCEIGRLEVRSGNVRISPEELMDRFVEEDPRFPVRYAVYADLRRRGWKPKPGRKFGTEFRAFRGEDERIAVKVLQEELDEFTAQDILEWLKLVEGTEFELVVAIVDNDYDLNYYVFSELVL</sequence>
<keyword id="KW-0002">3D-structure</keyword>
<keyword id="KW-1185">Reference proteome</keyword>
<feature type="chain" id="PRO_0000109483" description="EndA-like protein">
    <location>
        <begin position="1"/>
        <end position="166"/>
    </location>
</feature>
<feature type="strand" evidence="2">
    <location>
        <begin position="3"/>
        <end position="8"/>
    </location>
</feature>
<feature type="strand" evidence="2">
    <location>
        <begin position="11"/>
        <end position="14"/>
    </location>
</feature>
<feature type="helix" evidence="2">
    <location>
        <begin position="17"/>
        <end position="24"/>
    </location>
</feature>
<feature type="turn" evidence="2">
    <location>
        <begin position="25"/>
        <end position="27"/>
    </location>
</feature>
<feature type="strand" evidence="2">
    <location>
        <begin position="35"/>
        <end position="38"/>
    </location>
</feature>
<feature type="helix" evidence="2">
    <location>
        <begin position="40"/>
        <end position="48"/>
    </location>
</feature>
<feature type="strand" evidence="2">
    <location>
        <begin position="51"/>
        <end position="56"/>
    </location>
</feature>
<feature type="strand" evidence="2">
    <location>
        <begin position="59"/>
        <end position="61"/>
    </location>
</feature>
<feature type="helix" evidence="2">
    <location>
        <begin position="63"/>
        <end position="73"/>
    </location>
</feature>
<feature type="helix" evidence="2">
    <location>
        <begin position="77"/>
        <end position="89"/>
    </location>
</feature>
<feature type="strand" evidence="2">
    <location>
        <begin position="93"/>
        <end position="98"/>
    </location>
</feature>
<feature type="helix" evidence="2">
    <location>
        <begin position="99"/>
        <end position="101"/>
    </location>
</feature>
<feature type="strand" evidence="2">
    <location>
        <begin position="102"/>
        <end position="108"/>
    </location>
</feature>
<feature type="turn" evidence="2">
    <location>
        <begin position="109"/>
        <end position="111"/>
    </location>
</feature>
<feature type="strand" evidence="2">
    <location>
        <begin position="112"/>
        <end position="120"/>
    </location>
</feature>
<feature type="turn" evidence="2">
    <location>
        <begin position="121"/>
        <end position="123"/>
    </location>
</feature>
<feature type="helix" evidence="2">
    <location>
        <begin position="128"/>
        <end position="138"/>
    </location>
</feature>
<feature type="strand" evidence="2">
    <location>
        <begin position="144"/>
        <end position="150"/>
    </location>
</feature>
<feature type="strand" evidence="2">
    <location>
        <begin position="156"/>
        <end position="164"/>
    </location>
</feature>
<name>ENDAL_METKA</name>